<accession>Q9ZBV4</accession>
<name>FABH4_STRCO</name>
<comment type="function">
    <text evidence="1">Catalyzes the condensation reaction of fatty acid synthesis by the addition to an acyl acceptor of two carbons from malonyl-ACP. Catalyzes the first condensation reaction which initiates fatty acid synthesis and may therefore play a role in governing the total rate of fatty acid production. Possesses both acetoacetyl-ACP synthase and acetyl transacylase activities. Its substrate specificity determines the biosynthesis of branched-chain and/or straight-chain of fatty acids.</text>
</comment>
<comment type="catalytic activity">
    <reaction evidence="1">
        <text>malonyl-[ACP] + acetyl-CoA + H(+) = 3-oxobutanoyl-[ACP] + CO2 + CoA</text>
        <dbReference type="Rhea" id="RHEA:12080"/>
        <dbReference type="Rhea" id="RHEA-COMP:9623"/>
        <dbReference type="Rhea" id="RHEA-COMP:9625"/>
        <dbReference type="ChEBI" id="CHEBI:15378"/>
        <dbReference type="ChEBI" id="CHEBI:16526"/>
        <dbReference type="ChEBI" id="CHEBI:57287"/>
        <dbReference type="ChEBI" id="CHEBI:57288"/>
        <dbReference type="ChEBI" id="CHEBI:78449"/>
        <dbReference type="ChEBI" id="CHEBI:78450"/>
        <dbReference type="EC" id="2.3.1.180"/>
    </reaction>
</comment>
<comment type="pathway">
    <text evidence="1">Lipid metabolism; fatty acid biosynthesis.</text>
</comment>
<comment type="subunit">
    <text evidence="1">Homodimer.</text>
</comment>
<comment type="subcellular location">
    <subcellularLocation>
        <location evidence="1">Cytoplasm</location>
    </subcellularLocation>
</comment>
<comment type="domain">
    <text evidence="1">The last Arg residue of the ACP-binding site is essential for the weak association between ACP/AcpP and FabH.</text>
</comment>
<comment type="similarity">
    <text evidence="1">Belongs to the thiolase-like superfamily. FabH family.</text>
</comment>
<organism>
    <name type="scientific">Streptomyces coelicolor (strain ATCC BAA-471 / A3(2) / M145)</name>
    <dbReference type="NCBI Taxonomy" id="100226"/>
    <lineage>
        <taxon>Bacteria</taxon>
        <taxon>Bacillati</taxon>
        <taxon>Actinomycetota</taxon>
        <taxon>Actinomycetes</taxon>
        <taxon>Kitasatosporales</taxon>
        <taxon>Streptomycetaceae</taxon>
        <taxon>Streptomyces</taxon>
        <taxon>Streptomyces albidoflavus group</taxon>
    </lineage>
</organism>
<feature type="chain" id="PRO_0000110486" description="Beta-ketoacyl-[acyl-carrier-protein] synthase III 4">
    <location>
        <begin position="1"/>
        <end position="316"/>
    </location>
</feature>
<feature type="region of interest" description="ACP-binding" evidence="1">
    <location>
        <begin position="243"/>
        <end position="247"/>
    </location>
</feature>
<feature type="active site" evidence="1">
    <location>
        <position position="114"/>
    </location>
</feature>
<feature type="active site" evidence="1">
    <location>
        <position position="242"/>
    </location>
</feature>
<feature type="active site" evidence="1">
    <location>
        <position position="272"/>
    </location>
</feature>
<proteinExistence type="inferred from homology"/>
<dbReference type="EC" id="2.3.1.180" evidence="1"/>
<dbReference type="EMBL" id="AL939128">
    <property type="protein sequence ID" value="CAA22368.1"/>
    <property type="molecule type" value="Genomic_DNA"/>
</dbReference>
<dbReference type="PIR" id="T35006">
    <property type="entry name" value="T35006"/>
</dbReference>
<dbReference type="RefSeq" id="NP_630645.1">
    <property type="nucleotide sequence ID" value="NC_003888.3"/>
</dbReference>
<dbReference type="RefSeq" id="WP_011031009.1">
    <property type="nucleotide sequence ID" value="NZ_VNID01000002.1"/>
</dbReference>
<dbReference type="SMR" id="Q9ZBV4"/>
<dbReference type="STRING" id="100226.gene:17764221"/>
<dbReference type="PaxDb" id="100226-SCO6564"/>
<dbReference type="KEGG" id="sco:SCO6564"/>
<dbReference type="PATRIC" id="fig|100226.15.peg.6669"/>
<dbReference type="eggNOG" id="COG0332">
    <property type="taxonomic scope" value="Bacteria"/>
</dbReference>
<dbReference type="HOGENOM" id="CLU_039592_4_0_11"/>
<dbReference type="InParanoid" id="Q9ZBV4"/>
<dbReference type="OrthoDB" id="9815506at2"/>
<dbReference type="PhylomeDB" id="Q9ZBV4"/>
<dbReference type="UniPathway" id="UPA00094"/>
<dbReference type="Proteomes" id="UP000001973">
    <property type="component" value="Chromosome"/>
</dbReference>
<dbReference type="GO" id="GO:0005737">
    <property type="term" value="C:cytoplasm"/>
    <property type="evidence" value="ECO:0007669"/>
    <property type="project" value="UniProtKB-SubCell"/>
</dbReference>
<dbReference type="GO" id="GO:0004315">
    <property type="term" value="F:3-oxoacyl-[acyl-carrier-protein] synthase activity"/>
    <property type="evidence" value="ECO:0007669"/>
    <property type="project" value="InterPro"/>
</dbReference>
<dbReference type="GO" id="GO:0033818">
    <property type="term" value="F:beta-ketoacyl-acyl-carrier-protein synthase III activity"/>
    <property type="evidence" value="ECO:0007669"/>
    <property type="project" value="UniProtKB-UniRule"/>
</dbReference>
<dbReference type="GO" id="GO:0006633">
    <property type="term" value="P:fatty acid biosynthetic process"/>
    <property type="evidence" value="ECO:0007669"/>
    <property type="project" value="UniProtKB-UniRule"/>
</dbReference>
<dbReference type="CDD" id="cd00830">
    <property type="entry name" value="KAS_III"/>
    <property type="match status" value="1"/>
</dbReference>
<dbReference type="Gene3D" id="3.40.47.10">
    <property type="match status" value="1"/>
</dbReference>
<dbReference type="HAMAP" id="MF_01815">
    <property type="entry name" value="FabH"/>
    <property type="match status" value="1"/>
</dbReference>
<dbReference type="InterPro" id="IPR013747">
    <property type="entry name" value="ACP_syn_III_C"/>
</dbReference>
<dbReference type="InterPro" id="IPR013751">
    <property type="entry name" value="ACP_syn_III_N"/>
</dbReference>
<dbReference type="InterPro" id="IPR004655">
    <property type="entry name" value="FabH"/>
</dbReference>
<dbReference type="InterPro" id="IPR016039">
    <property type="entry name" value="Thiolase-like"/>
</dbReference>
<dbReference type="NCBIfam" id="TIGR00747">
    <property type="entry name" value="fabH"/>
    <property type="match status" value="1"/>
</dbReference>
<dbReference type="NCBIfam" id="NF006829">
    <property type="entry name" value="PRK09352.1"/>
    <property type="match status" value="1"/>
</dbReference>
<dbReference type="PANTHER" id="PTHR43091">
    <property type="entry name" value="3-OXOACYL-[ACYL-CARRIER-PROTEIN] SYNTHASE"/>
    <property type="match status" value="1"/>
</dbReference>
<dbReference type="PANTHER" id="PTHR43091:SF1">
    <property type="entry name" value="BETA-KETOACYL-[ACYL-CARRIER-PROTEIN] SYNTHASE III, CHLOROPLASTIC"/>
    <property type="match status" value="1"/>
</dbReference>
<dbReference type="Pfam" id="PF08545">
    <property type="entry name" value="ACP_syn_III"/>
    <property type="match status" value="1"/>
</dbReference>
<dbReference type="Pfam" id="PF08541">
    <property type="entry name" value="ACP_syn_III_C"/>
    <property type="match status" value="1"/>
</dbReference>
<dbReference type="SUPFAM" id="SSF53901">
    <property type="entry name" value="Thiolase-like"/>
    <property type="match status" value="1"/>
</dbReference>
<evidence type="ECO:0000255" key="1">
    <source>
        <dbReference type="HAMAP-Rule" id="MF_01815"/>
    </source>
</evidence>
<gene>
    <name evidence="1" type="primary">fabH4</name>
    <name type="ordered locus">SCO6564</name>
    <name type="ORF">SC4B5.14</name>
</gene>
<protein>
    <recommendedName>
        <fullName evidence="1">Beta-ketoacyl-[acyl-carrier-protein] synthase III 4</fullName>
        <shortName evidence="1">Beta-ketoacyl-ACP synthase III 4</shortName>
        <shortName evidence="1">KAS III 4</shortName>
        <ecNumber evidence="1">2.3.1.180</ecNumber>
    </recommendedName>
    <alternativeName>
        <fullName evidence="1">3-oxoacyl-[acyl-carrier-protein] synthase 3 4</fullName>
    </alternativeName>
    <alternativeName>
        <fullName evidence="1">3-oxoacyl-[acyl-carrier-protein] synthase III 4</fullName>
    </alternativeName>
</protein>
<keyword id="KW-0012">Acyltransferase</keyword>
<keyword id="KW-0963">Cytoplasm</keyword>
<keyword id="KW-0275">Fatty acid biosynthesis</keyword>
<keyword id="KW-0276">Fatty acid metabolism</keyword>
<keyword id="KW-0444">Lipid biosynthesis</keyword>
<keyword id="KW-0443">Lipid metabolism</keyword>
<keyword id="KW-0511">Multifunctional enzyme</keyword>
<keyword id="KW-1185">Reference proteome</keyword>
<keyword id="KW-0808">Transferase</keyword>
<sequence length="316" mass="32479">MHQGSRITAVGHYQPARILTNEDLAGMVDTSDEWIRSRVGIRTRRIAGPDEPVDELAGHAAAKALASAGLTPADVDLVVVATSTAIDRSPNTAARVAARLGIPGPAALDLNVVCAGFTHALATADHAVRAGSASRALVVGADKMSEVVDWTDRTTCVLVGDGAGAAVVEACAPGEEPGIGPVLWGSVPEMGNAVRIEGTPPRFAQEGQSVYRWATTRLPAIARQACERSGLEPADLAAVVLHQANLRIVEPLAAKIGAVNAVVARDVVESGNTSAASIPLALSKLAERGEITTGDPALLFGFGGNLSYAGQVVRCP</sequence>
<reference key="1">
    <citation type="journal article" date="2002" name="Nature">
        <title>Complete genome sequence of the model actinomycete Streptomyces coelicolor A3(2).</title>
        <authorList>
            <person name="Bentley S.D."/>
            <person name="Chater K.F."/>
            <person name="Cerdeno-Tarraga A.-M."/>
            <person name="Challis G.L."/>
            <person name="Thomson N.R."/>
            <person name="James K.D."/>
            <person name="Harris D.E."/>
            <person name="Quail M.A."/>
            <person name="Kieser H."/>
            <person name="Harper D."/>
            <person name="Bateman A."/>
            <person name="Brown S."/>
            <person name="Chandra G."/>
            <person name="Chen C.W."/>
            <person name="Collins M."/>
            <person name="Cronin A."/>
            <person name="Fraser A."/>
            <person name="Goble A."/>
            <person name="Hidalgo J."/>
            <person name="Hornsby T."/>
            <person name="Howarth S."/>
            <person name="Huang C.-H."/>
            <person name="Kieser T."/>
            <person name="Larke L."/>
            <person name="Murphy L.D."/>
            <person name="Oliver K."/>
            <person name="O'Neil S."/>
            <person name="Rabbinowitsch E."/>
            <person name="Rajandream M.A."/>
            <person name="Rutherford K.M."/>
            <person name="Rutter S."/>
            <person name="Seeger K."/>
            <person name="Saunders D."/>
            <person name="Sharp S."/>
            <person name="Squares R."/>
            <person name="Squares S."/>
            <person name="Taylor K."/>
            <person name="Warren T."/>
            <person name="Wietzorrek A."/>
            <person name="Woodward J.R."/>
            <person name="Barrell B.G."/>
            <person name="Parkhill J."/>
            <person name="Hopwood D.A."/>
        </authorList>
    </citation>
    <scope>NUCLEOTIDE SEQUENCE [LARGE SCALE GENOMIC DNA]</scope>
    <source>
        <strain>ATCC BAA-471 / A3(2) / M145</strain>
    </source>
</reference>